<keyword id="KW-0472">Membrane</keyword>
<keyword id="KW-1185">Reference proteome</keyword>
<keyword id="KW-0812">Transmembrane</keyword>
<keyword id="KW-1133">Transmembrane helix</keyword>
<organism>
    <name type="scientific">Bacillus subtilis (strain 168)</name>
    <dbReference type="NCBI Taxonomy" id="224308"/>
    <lineage>
        <taxon>Bacteria</taxon>
        <taxon>Bacillati</taxon>
        <taxon>Bacillota</taxon>
        <taxon>Bacilli</taxon>
        <taxon>Bacillales</taxon>
        <taxon>Bacillaceae</taxon>
        <taxon>Bacillus</taxon>
    </lineage>
</organism>
<proteinExistence type="predicted"/>
<gene>
    <name type="primary">yuzG</name>
    <name type="ordered locus">BSU32120</name>
</gene>
<dbReference type="EMBL" id="AL009126">
    <property type="protein sequence ID" value="CAB15202.1"/>
    <property type="molecule type" value="Genomic_DNA"/>
</dbReference>
<dbReference type="PIR" id="F70026">
    <property type="entry name" value="F70026"/>
</dbReference>
<dbReference type="RefSeq" id="NP_391092.1">
    <property type="nucleotide sequence ID" value="NC_000964.3"/>
</dbReference>
<dbReference type="RefSeq" id="WP_003228723.1">
    <property type="nucleotide sequence ID" value="NZ_OZ025638.1"/>
</dbReference>
<dbReference type="SMR" id="O32111"/>
<dbReference type="FunCoup" id="O32111">
    <property type="interactions" value="107"/>
</dbReference>
<dbReference type="PaxDb" id="224308-BSU32120"/>
<dbReference type="EnsemblBacteria" id="CAB15202">
    <property type="protein sequence ID" value="CAB15202"/>
    <property type="gene ID" value="BSU_32120"/>
</dbReference>
<dbReference type="GeneID" id="936597"/>
<dbReference type="KEGG" id="bsu:BSU32120"/>
<dbReference type="PATRIC" id="fig|224308.179.peg.3478"/>
<dbReference type="InParanoid" id="O32111"/>
<dbReference type="BioCyc" id="BSUB:BSU32120-MONOMER"/>
<dbReference type="Proteomes" id="UP000001570">
    <property type="component" value="Chromosome"/>
</dbReference>
<dbReference type="GO" id="GO:0016020">
    <property type="term" value="C:membrane"/>
    <property type="evidence" value="ECO:0007669"/>
    <property type="project" value="UniProtKB-SubCell"/>
</dbReference>
<evidence type="ECO:0000255" key="1"/>
<evidence type="ECO:0000305" key="2"/>
<feature type="chain" id="PRO_0000049933" description="Uncharacterized protein YuzG">
    <location>
        <begin position="1"/>
        <end position="46"/>
    </location>
</feature>
<feature type="transmembrane region" description="Helical" evidence="1">
    <location>
        <begin position="20"/>
        <end position="42"/>
    </location>
</feature>
<accession>O32111</accession>
<name>YUZG_BACSU</name>
<reference key="1">
    <citation type="journal article" date="1997" name="Nature">
        <title>The complete genome sequence of the Gram-positive bacterium Bacillus subtilis.</title>
        <authorList>
            <person name="Kunst F."/>
            <person name="Ogasawara N."/>
            <person name="Moszer I."/>
            <person name="Albertini A.M."/>
            <person name="Alloni G."/>
            <person name="Azevedo V."/>
            <person name="Bertero M.G."/>
            <person name="Bessieres P."/>
            <person name="Bolotin A."/>
            <person name="Borchert S."/>
            <person name="Borriss R."/>
            <person name="Boursier L."/>
            <person name="Brans A."/>
            <person name="Braun M."/>
            <person name="Brignell S.C."/>
            <person name="Bron S."/>
            <person name="Brouillet S."/>
            <person name="Bruschi C.V."/>
            <person name="Caldwell B."/>
            <person name="Capuano V."/>
            <person name="Carter N.M."/>
            <person name="Choi S.-K."/>
            <person name="Codani J.-J."/>
            <person name="Connerton I.F."/>
            <person name="Cummings N.J."/>
            <person name="Daniel R.A."/>
            <person name="Denizot F."/>
            <person name="Devine K.M."/>
            <person name="Duesterhoeft A."/>
            <person name="Ehrlich S.D."/>
            <person name="Emmerson P.T."/>
            <person name="Entian K.-D."/>
            <person name="Errington J."/>
            <person name="Fabret C."/>
            <person name="Ferrari E."/>
            <person name="Foulger D."/>
            <person name="Fritz C."/>
            <person name="Fujita M."/>
            <person name="Fujita Y."/>
            <person name="Fuma S."/>
            <person name="Galizzi A."/>
            <person name="Galleron N."/>
            <person name="Ghim S.-Y."/>
            <person name="Glaser P."/>
            <person name="Goffeau A."/>
            <person name="Golightly E.J."/>
            <person name="Grandi G."/>
            <person name="Guiseppi G."/>
            <person name="Guy B.J."/>
            <person name="Haga K."/>
            <person name="Haiech J."/>
            <person name="Harwood C.R."/>
            <person name="Henaut A."/>
            <person name="Hilbert H."/>
            <person name="Holsappel S."/>
            <person name="Hosono S."/>
            <person name="Hullo M.-F."/>
            <person name="Itaya M."/>
            <person name="Jones L.-M."/>
            <person name="Joris B."/>
            <person name="Karamata D."/>
            <person name="Kasahara Y."/>
            <person name="Klaerr-Blanchard M."/>
            <person name="Klein C."/>
            <person name="Kobayashi Y."/>
            <person name="Koetter P."/>
            <person name="Koningstein G."/>
            <person name="Krogh S."/>
            <person name="Kumano M."/>
            <person name="Kurita K."/>
            <person name="Lapidus A."/>
            <person name="Lardinois S."/>
            <person name="Lauber J."/>
            <person name="Lazarevic V."/>
            <person name="Lee S.-M."/>
            <person name="Levine A."/>
            <person name="Liu H."/>
            <person name="Masuda S."/>
            <person name="Mauel C."/>
            <person name="Medigue C."/>
            <person name="Medina N."/>
            <person name="Mellado R.P."/>
            <person name="Mizuno M."/>
            <person name="Moestl D."/>
            <person name="Nakai S."/>
            <person name="Noback M."/>
            <person name="Noone D."/>
            <person name="O'Reilly M."/>
            <person name="Ogawa K."/>
            <person name="Ogiwara A."/>
            <person name="Oudega B."/>
            <person name="Park S.-H."/>
            <person name="Parro V."/>
            <person name="Pohl T.M."/>
            <person name="Portetelle D."/>
            <person name="Porwollik S."/>
            <person name="Prescott A.M."/>
            <person name="Presecan E."/>
            <person name="Pujic P."/>
            <person name="Purnelle B."/>
            <person name="Rapoport G."/>
            <person name="Rey M."/>
            <person name="Reynolds S."/>
            <person name="Rieger M."/>
            <person name="Rivolta C."/>
            <person name="Rocha E."/>
            <person name="Roche B."/>
            <person name="Rose M."/>
            <person name="Sadaie Y."/>
            <person name="Sato T."/>
            <person name="Scanlan E."/>
            <person name="Schleich S."/>
            <person name="Schroeter R."/>
            <person name="Scoffone F."/>
            <person name="Sekiguchi J."/>
            <person name="Sekowska A."/>
            <person name="Seror S.J."/>
            <person name="Serror P."/>
            <person name="Shin B.-S."/>
            <person name="Soldo B."/>
            <person name="Sorokin A."/>
            <person name="Tacconi E."/>
            <person name="Takagi T."/>
            <person name="Takahashi H."/>
            <person name="Takemaru K."/>
            <person name="Takeuchi M."/>
            <person name="Tamakoshi A."/>
            <person name="Tanaka T."/>
            <person name="Terpstra P."/>
            <person name="Tognoni A."/>
            <person name="Tosato V."/>
            <person name="Uchiyama S."/>
            <person name="Vandenbol M."/>
            <person name="Vannier F."/>
            <person name="Vassarotti A."/>
            <person name="Viari A."/>
            <person name="Wambutt R."/>
            <person name="Wedler E."/>
            <person name="Wedler H."/>
            <person name="Weitzenegger T."/>
            <person name="Winters P."/>
            <person name="Wipat A."/>
            <person name="Yamamoto H."/>
            <person name="Yamane K."/>
            <person name="Yasumoto K."/>
            <person name="Yata K."/>
            <person name="Yoshida K."/>
            <person name="Yoshikawa H.-F."/>
            <person name="Zumstein E."/>
            <person name="Yoshikawa H."/>
            <person name="Danchin A."/>
        </authorList>
    </citation>
    <scope>NUCLEOTIDE SEQUENCE [LARGE SCALE GENOMIC DNA]</scope>
    <source>
        <strain>168</strain>
    </source>
</reference>
<sequence>MAQNEEKTPKSQKIQDRIIMAMIWVVAALVIALVVGTALNYINIFK</sequence>
<comment type="subcellular location">
    <subcellularLocation>
        <location evidence="2">Membrane</location>
        <topology evidence="2">Single-pass membrane protein</topology>
    </subcellularLocation>
</comment>
<protein>
    <recommendedName>
        <fullName>Uncharacterized protein YuzG</fullName>
    </recommendedName>
</protein>